<reference key="1">
    <citation type="submission" date="2006-03" db="EMBL/GenBank/DDBJ databases">
        <title>Cloning and sequence analysis of phycoerythrin gene of Porphyra haitanensis.</title>
        <authorList>
            <person name="Zuo Z.-H."/>
            <person name="Yan G.-L."/>
            <person name="Xu S.-Y."/>
            <person name="Chen Y.-X."/>
        </authorList>
    </citation>
    <scope>NUCLEOTIDE SEQUENCE [GENOMIC DNA]</scope>
</reference>
<evidence type="ECO:0000250" key="1"/>
<evidence type="ECO:0000305" key="2"/>
<geneLocation type="chloroplast"/>
<keyword id="KW-0042">Antenna complex</keyword>
<keyword id="KW-0089">Bile pigment</keyword>
<keyword id="KW-0150">Chloroplast</keyword>
<keyword id="KW-0157">Chromophore</keyword>
<keyword id="KW-0249">Electron transport</keyword>
<keyword id="KW-0472">Membrane</keyword>
<keyword id="KW-0602">Photosynthesis</keyword>
<keyword id="KW-0605">Phycobilisome</keyword>
<keyword id="KW-0934">Plastid</keyword>
<keyword id="KW-0793">Thylakoid</keyword>
<keyword id="KW-0813">Transport</keyword>
<sequence length="164" mass="17682">MKSVITTTISAADAAGRFPSSSDLESVQGNIQRAAARLEAAEKLASNHEAVVKEAGDACFAKYSYLKNPGEAGDSQEKVNKCYRDVDHYMRLVNYCLVVGGTGPVDEWGIAGAREVYRTLNLPTSAYVASFAFARDRLCVPRDMSAQAGVEYAGNLDYLINALC</sequence>
<dbReference type="EMBL" id="DQ449070">
    <property type="protein sequence ID" value="ABE27594.1"/>
    <property type="molecule type" value="Genomic_DNA"/>
</dbReference>
<dbReference type="SMR" id="Q0ZHI7"/>
<dbReference type="GO" id="GO:0009535">
    <property type="term" value="C:chloroplast thylakoid membrane"/>
    <property type="evidence" value="ECO:0007669"/>
    <property type="project" value="UniProtKB-SubCell"/>
</dbReference>
<dbReference type="GO" id="GO:0030089">
    <property type="term" value="C:phycobilisome"/>
    <property type="evidence" value="ECO:0007669"/>
    <property type="project" value="UniProtKB-KW"/>
</dbReference>
<dbReference type="GO" id="GO:0015979">
    <property type="term" value="P:photosynthesis"/>
    <property type="evidence" value="ECO:0007669"/>
    <property type="project" value="UniProtKB-KW"/>
</dbReference>
<dbReference type="CDD" id="cd14769">
    <property type="entry name" value="PE_alpha"/>
    <property type="match status" value="1"/>
</dbReference>
<dbReference type="Gene3D" id="1.10.490.20">
    <property type="entry name" value="Phycocyanins"/>
    <property type="match status" value="1"/>
</dbReference>
<dbReference type="InterPro" id="IPR009050">
    <property type="entry name" value="Globin-like_sf"/>
</dbReference>
<dbReference type="InterPro" id="IPR012128">
    <property type="entry name" value="Phycobilisome_asu/bsu"/>
</dbReference>
<dbReference type="InterPro" id="IPR038719">
    <property type="entry name" value="Phycobilisome_asu/bsu_sf"/>
</dbReference>
<dbReference type="PANTHER" id="PTHR34011:SF4">
    <property type="entry name" value="C-PHYCOCYANIN ALPHA SUBUNIT"/>
    <property type="match status" value="1"/>
</dbReference>
<dbReference type="PANTHER" id="PTHR34011">
    <property type="entry name" value="PHYCOBILISOME 32.1 KDA LINKER POLYPEPTIDE, PHYCOCYANIN-ASSOCIATED, ROD 2-RELATED"/>
    <property type="match status" value="1"/>
</dbReference>
<dbReference type="Pfam" id="PF00502">
    <property type="entry name" value="Phycobilisome"/>
    <property type="match status" value="1"/>
</dbReference>
<dbReference type="PIRSF" id="PIRSF000081">
    <property type="entry name" value="Phycocyanin"/>
    <property type="match status" value="1"/>
</dbReference>
<dbReference type="SUPFAM" id="SSF46458">
    <property type="entry name" value="Globin-like"/>
    <property type="match status" value="1"/>
</dbReference>
<name>PHEA_PYRHA</name>
<proteinExistence type="inferred from homology"/>
<feature type="chain" id="PRO_0000277337" description="R-phycoerythrin alpha chain">
    <location>
        <begin position="1"/>
        <end position="164"/>
    </location>
</feature>
<feature type="binding site" description="covalent" evidence="1">
    <location>
        <position position="82"/>
    </location>
    <ligand>
        <name>(2R,3E)-phycoerythrobilin</name>
        <dbReference type="ChEBI" id="CHEBI:85276"/>
        <label>1</label>
    </ligand>
</feature>
<feature type="binding site" description="covalent" evidence="1">
    <location>
        <position position="139"/>
    </location>
    <ligand>
        <name>(2R,3E)-phycoerythrobilin</name>
        <dbReference type="ChEBI" id="CHEBI:85276"/>
        <label>2</label>
    </ligand>
</feature>
<gene>
    <name type="primary">cpeA</name>
</gene>
<organism>
    <name type="scientific">Pyropia haitanensis</name>
    <name type="common">Red seaweed</name>
    <name type="synonym">Porphyra haitanensis</name>
    <dbReference type="NCBI Taxonomy" id="1262161"/>
    <lineage>
        <taxon>Eukaryota</taxon>
        <taxon>Rhodophyta</taxon>
        <taxon>Bangiophyceae</taxon>
        <taxon>Bangiales</taxon>
        <taxon>Bangiaceae</taxon>
        <taxon>Pyropia</taxon>
    </lineage>
</organism>
<comment type="function">
    <text evidence="1">Light-harvesting photosynthetic bile pigment-protein from the phycobiliprotein complex.</text>
</comment>
<comment type="subunit">
    <text>Heterodimer of an alpha and a beta chain.</text>
</comment>
<comment type="subcellular location">
    <subcellularLocation>
        <location evidence="1">Plastid</location>
        <location evidence="1">Chloroplast thylakoid membrane</location>
        <topology evidence="1">Peripheral membrane protein</topology>
        <orientation evidence="1">Stromal side</orientation>
    </subcellularLocation>
    <text evidence="1">Forms the periphery of the phycobilisome rod.</text>
</comment>
<comment type="PTM">
    <text evidence="1">Contains two covalently linked bilin chromophores.</text>
</comment>
<comment type="similarity">
    <text evidence="2">Belongs to the phycobiliprotein family.</text>
</comment>
<accession>Q0ZHI7</accession>
<protein>
    <recommendedName>
        <fullName>R-phycoerythrin alpha chain</fullName>
    </recommendedName>
</protein>